<dbReference type="EC" id="4.3.1.3" evidence="1"/>
<dbReference type="EMBL" id="CP000873">
    <property type="protein sequence ID" value="ABX64097.1"/>
    <property type="molecule type" value="Genomic_DNA"/>
</dbReference>
<dbReference type="RefSeq" id="WP_006133477.1">
    <property type="nucleotide sequence ID" value="NC_010104.1"/>
</dbReference>
<dbReference type="SMR" id="A9MCL0"/>
<dbReference type="GeneID" id="55592562"/>
<dbReference type="KEGG" id="bcs:BCAN_B0950"/>
<dbReference type="HOGENOM" id="CLU_014801_4_0_5"/>
<dbReference type="PhylomeDB" id="A9MCL0"/>
<dbReference type="UniPathway" id="UPA00379">
    <property type="reaction ID" value="UER00549"/>
</dbReference>
<dbReference type="Proteomes" id="UP000001385">
    <property type="component" value="Chromosome II"/>
</dbReference>
<dbReference type="GO" id="GO:0005737">
    <property type="term" value="C:cytoplasm"/>
    <property type="evidence" value="ECO:0007669"/>
    <property type="project" value="UniProtKB-SubCell"/>
</dbReference>
<dbReference type="GO" id="GO:0004397">
    <property type="term" value="F:histidine ammonia-lyase activity"/>
    <property type="evidence" value="ECO:0007669"/>
    <property type="project" value="UniProtKB-UniRule"/>
</dbReference>
<dbReference type="GO" id="GO:0019556">
    <property type="term" value="P:L-histidine catabolic process to glutamate and formamide"/>
    <property type="evidence" value="ECO:0007669"/>
    <property type="project" value="UniProtKB-UniPathway"/>
</dbReference>
<dbReference type="GO" id="GO:0019557">
    <property type="term" value="P:L-histidine catabolic process to glutamate and formate"/>
    <property type="evidence" value="ECO:0007669"/>
    <property type="project" value="UniProtKB-UniPathway"/>
</dbReference>
<dbReference type="CDD" id="cd00332">
    <property type="entry name" value="PAL-HAL"/>
    <property type="match status" value="1"/>
</dbReference>
<dbReference type="FunFam" id="1.10.275.10:FF:000005">
    <property type="entry name" value="Histidine ammonia-lyase"/>
    <property type="match status" value="1"/>
</dbReference>
<dbReference type="FunFam" id="1.20.200.10:FF:000003">
    <property type="entry name" value="Histidine ammonia-lyase"/>
    <property type="match status" value="1"/>
</dbReference>
<dbReference type="Gene3D" id="1.20.200.10">
    <property type="entry name" value="Fumarase/aspartase (Central domain)"/>
    <property type="match status" value="1"/>
</dbReference>
<dbReference type="Gene3D" id="1.10.275.10">
    <property type="entry name" value="Fumarase/aspartase (N-terminal domain)"/>
    <property type="match status" value="1"/>
</dbReference>
<dbReference type="HAMAP" id="MF_00229">
    <property type="entry name" value="His_ammonia_lyase"/>
    <property type="match status" value="1"/>
</dbReference>
<dbReference type="InterPro" id="IPR001106">
    <property type="entry name" value="Aromatic_Lyase"/>
</dbReference>
<dbReference type="InterPro" id="IPR024083">
    <property type="entry name" value="Fumarase/histidase_N"/>
</dbReference>
<dbReference type="InterPro" id="IPR005921">
    <property type="entry name" value="HutH"/>
</dbReference>
<dbReference type="InterPro" id="IPR008948">
    <property type="entry name" value="L-Aspartase-like"/>
</dbReference>
<dbReference type="InterPro" id="IPR022313">
    <property type="entry name" value="Phe/His_NH3-lyase_AS"/>
</dbReference>
<dbReference type="NCBIfam" id="TIGR01225">
    <property type="entry name" value="hutH"/>
    <property type="match status" value="1"/>
</dbReference>
<dbReference type="NCBIfam" id="NF006871">
    <property type="entry name" value="PRK09367.1"/>
    <property type="match status" value="1"/>
</dbReference>
<dbReference type="PANTHER" id="PTHR10362">
    <property type="entry name" value="HISTIDINE AMMONIA-LYASE"/>
    <property type="match status" value="1"/>
</dbReference>
<dbReference type="Pfam" id="PF00221">
    <property type="entry name" value="Lyase_aromatic"/>
    <property type="match status" value="1"/>
</dbReference>
<dbReference type="SUPFAM" id="SSF48557">
    <property type="entry name" value="L-aspartase-like"/>
    <property type="match status" value="1"/>
</dbReference>
<dbReference type="PROSITE" id="PS00488">
    <property type="entry name" value="PAL_HISTIDASE"/>
    <property type="match status" value="1"/>
</dbReference>
<reference key="1">
    <citation type="submission" date="2007-10" db="EMBL/GenBank/DDBJ databases">
        <title>Brucella canis ATCC 23365 whole genome shotgun sequencing project.</title>
        <authorList>
            <person name="Setubal J.C."/>
            <person name="Bowns C."/>
            <person name="Boyle S."/>
            <person name="Crasta O.R."/>
            <person name="Czar M.J."/>
            <person name="Dharmanolla C."/>
            <person name="Gillespie J.J."/>
            <person name="Kenyon R.W."/>
            <person name="Lu J."/>
            <person name="Mane S."/>
            <person name="Mohapatra S."/>
            <person name="Nagrani S."/>
            <person name="Purkayastha A."/>
            <person name="Rajasimha H.K."/>
            <person name="Shallom J.M."/>
            <person name="Shallom S."/>
            <person name="Shukla M."/>
            <person name="Snyder E.E."/>
            <person name="Sobral B.W."/>
            <person name="Wattam A.R."/>
            <person name="Will R."/>
            <person name="Williams K."/>
            <person name="Yoo H."/>
            <person name="Bruce D."/>
            <person name="Detter C."/>
            <person name="Munk C."/>
            <person name="Brettin T.S."/>
        </authorList>
    </citation>
    <scope>NUCLEOTIDE SEQUENCE [LARGE SCALE GENOMIC DNA]</scope>
    <source>
        <strain>ATCC 23365 / NCTC 10854 / RM-666</strain>
    </source>
</reference>
<evidence type="ECO:0000255" key="1">
    <source>
        <dbReference type="HAMAP-Rule" id="MF_00229"/>
    </source>
</evidence>
<keyword id="KW-0963">Cytoplasm</keyword>
<keyword id="KW-0369">Histidine metabolism</keyword>
<keyword id="KW-0456">Lyase</keyword>
<keyword id="KW-1185">Reference proteome</keyword>
<feature type="chain" id="PRO_1000078222" description="Histidine ammonia-lyase">
    <location>
        <begin position="1"/>
        <end position="511"/>
    </location>
</feature>
<feature type="modified residue" description="2,3-didehydroalanine (Ser)" evidence="1">
    <location>
        <position position="143"/>
    </location>
</feature>
<feature type="cross-link" description="5-imidazolinone (Ala-Gly)" evidence="1">
    <location>
        <begin position="142"/>
        <end position="144"/>
    </location>
</feature>
<comment type="catalytic activity">
    <reaction evidence="1">
        <text>L-histidine = trans-urocanate + NH4(+)</text>
        <dbReference type="Rhea" id="RHEA:21232"/>
        <dbReference type="ChEBI" id="CHEBI:17771"/>
        <dbReference type="ChEBI" id="CHEBI:28938"/>
        <dbReference type="ChEBI" id="CHEBI:57595"/>
        <dbReference type="EC" id="4.3.1.3"/>
    </reaction>
</comment>
<comment type="pathway">
    <text evidence="1">Amino-acid degradation; L-histidine degradation into L-glutamate; N-formimidoyl-L-glutamate from L-histidine: step 1/3.</text>
</comment>
<comment type="subcellular location">
    <subcellularLocation>
        <location evidence="1">Cytoplasm</location>
    </subcellularLocation>
</comment>
<comment type="PTM">
    <text evidence="1">Contains an active site 4-methylidene-imidazol-5-one (MIO), which is formed autocatalytically by cyclization and dehydration of residues Ala-Ser-Gly.</text>
</comment>
<comment type="similarity">
    <text evidence="1">Belongs to the PAL/histidase family.</text>
</comment>
<proteinExistence type="inferred from homology"/>
<accession>A9MCL0</accession>
<sequence>MTIILKPGSVPLETLEKIYREGLPVRIDPAFHAGIEKAAARIAEIAAGDAPVYGINTGFGKLASIRIAAGDVATLQRNLILSHCCGVGEPLSENIVRLIMALKLVSLGRGASGVRLEVITLIEAMLEKGVIPMIPEKGSVGASGDLAPLAHMTAAMIGEGEAFYRGERLSGAKALGKAGLKPVVLAAKEGLALINGTQTSTALALAGLFRAHRAVRTALITGALSTDAAMGSDAPFHEEIHQLRGHKGQIDAGRALRTLLEGSAIRRSHLEGDQRVQDPYCIRCQPRVDGACLDILRQAARTLEIEANAVTDNPLVLSDGRAVSGGNFHAEPVAFAADQIALAVCEIGAISQRRIALLVDPSLSFGLPAFLTRKPGLNSGLMIAEVTSAALMSENKQMAHPASVDSTPTSANQEDHVSMACHGARRLLQMTANLNAIIGIEALTGALGVELRKPLTTSAELAKVIAALRAKVVTLEEDRYMADDLKAAAELVADGTLSGVISAGILPDLEA</sequence>
<organism>
    <name type="scientific">Brucella canis (strain ATCC 23365 / NCTC 10854 / RM-666)</name>
    <dbReference type="NCBI Taxonomy" id="483179"/>
    <lineage>
        <taxon>Bacteria</taxon>
        <taxon>Pseudomonadati</taxon>
        <taxon>Pseudomonadota</taxon>
        <taxon>Alphaproteobacteria</taxon>
        <taxon>Hyphomicrobiales</taxon>
        <taxon>Brucellaceae</taxon>
        <taxon>Brucella/Ochrobactrum group</taxon>
        <taxon>Brucella</taxon>
    </lineage>
</organism>
<name>HUTH_BRUC2</name>
<gene>
    <name evidence="1" type="primary">hutH</name>
    <name type="ordered locus">BCAN_B0950</name>
</gene>
<protein>
    <recommendedName>
        <fullName evidence="1">Histidine ammonia-lyase</fullName>
        <shortName evidence="1">Histidase</shortName>
        <ecNumber evidence="1">4.3.1.3</ecNumber>
    </recommendedName>
</protein>